<gene>
    <name type="primary">mppO</name>
</gene>
<dbReference type="EC" id="1.14.11.40"/>
<dbReference type="EMBL" id="AY735112">
    <property type="protein sequence ID" value="AAU34208.1"/>
    <property type="molecule type" value="Genomic_DNA"/>
</dbReference>
<dbReference type="SMR" id="Q643C1"/>
<dbReference type="KEGG" id="ag:AAU34208"/>
<dbReference type="BRENDA" id="1.14.11.40">
    <property type="organism ID" value="6043"/>
</dbReference>
<dbReference type="GO" id="GO:0005506">
    <property type="term" value="F:iron ion binding"/>
    <property type="evidence" value="ECO:0007669"/>
    <property type="project" value="InterPro"/>
</dbReference>
<dbReference type="GO" id="GO:0016491">
    <property type="term" value="F:oxidoreductase activity"/>
    <property type="evidence" value="ECO:0007669"/>
    <property type="project" value="UniProtKB-KW"/>
</dbReference>
<dbReference type="GO" id="GO:0017000">
    <property type="term" value="P:antibiotic biosynthetic process"/>
    <property type="evidence" value="ECO:0007669"/>
    <property type="project" value="UniProtKB-KW"/>
</dbReference>
<dbReference type="Gene3D" id="3.60.130.10">
    <property type="entry name" value="Clavaminate synthase-like"/>
    <property type="match status" value="1"/>
</dbReference>
<dbReference type="InterPro" id="IPR053447">
    <property type="entry name" value="Alpha-KG_dependent_hydroxylase"/>
</dbReference>
<dbReference type="InterPro" id="IPR050411">
    <property type="entry name" value="AlphaKG_dependent_hydroxylases"/>
</dbReference>
<dbReference type="InterPro" id="IPR014503">
    <property type="entry name" value="Clavaminate_syn-like"/>
</dbReference>
<dbReference type="InterPro" id="IPR042098">
    <property type="entry name" value="TauD-like_sf"/>
</dbReference>
<dbReference type="InterPro" id="IPR003819">
    <property type="entry name" value="TauD/TfdA-like"/>
</dbReference>
<dbReference type="NCBIfam" id="NF041363">
    <property type="entry name" value="GntD_guanitoxin"/>
    <property type="match status" value="1"/>
</dbReference>
<dbReference type="PANTHER" id="PTHR10696">
    <property type="entry name" value="GAMMA-BUTYROBETAINE HYDROXYLASE-RELATED"/>
    <property type="match status" value="1"/>
</dbReference>
<dbReference type="PANTHER" id="PTHR10696:SF56">
    <property type="entry name" value="TAUD_TFDA-LIKE DOMAIN-CONTAINING PROTEIN"/>
    <property type="match status" value="1"/>
</dbReference>
<dbReference type="Pfam" id="PF02668">
    <property type="entry name" value="TauD"/>
    <property type="match status" value="1"/>
</dbReference>
<dbReference type="PIRSF" id="PIRSF019543">
    <property type="entry name" value="Clavaminate_syn"/>
    <property type="match status" value="1"/>
</dbReference>
<dbReference type="SUPFAM" id="SSF51197">
    <property type="entry name" value="Clavaminate synthase-like"/>
    <property type="match status" value="1"/>
</dbReference>
<accession>Q643C1</accession>
<name>MPPO_STRHY</name>
<comment type="function">
    <text evidence="3">Hydroxylates the beta carbon of free L-enduracididine to produce (3S)-3-hydroxy-L-enduracididine in biosynthesis of the nonproteinogenic amino acid beta-hydroxyenduracididine, a component of antibiotic mannopeptimycin.</text>
</comment>
<comment type="catalytic activity">
    <reaction evidence="3">
        <text>L-enduracididine + 2-oxoglutarate + O2 = (3S)-3-hydroxy-L-enduracididine + succinate + CO2</text>
        <dbReference type="Rhea" id="RHEA:36603"/>
        <dbReference type="ChEBI" id="CHEBI:15379"/>
        <dbReference type="ChEBI" id="CHEBI:16526"/>
        <dbReference type="ChEBI" id="CHEBI:16810"/>
        <dbReference type="ChEBI" id="CHEBI:30031"/>
        <dbReference type="ChEBI" id="CHEBI:73936"/>
        <dbReference type="ChEBI" id="CHEBI:73937"/>
        <dbReference type="EC" id="1.14.11.40"/>
    </reaction>
</comment>
<comment type="cofactor">
    <cofactor evidence="1">
        <name>Fe(2+)</name>
        <dbReference type="ChEBI" id="CHEBI:29033"/>
    </cofactor>
    <text evidence="1">Binds 1 Fe(2+) ion per subunit.</text>
</comment>
<comment type="pathway">
    <text evidence="3">Antibiotic biosynthesis.</text>
</comment>
<comment type="disruption phenotype">
    <text evidence="3">Cells produce dideoxy-mannopeptimycins.</text>
</comment>
<comment type="similarity">
    <text evidence="4">Belongs to the clavaminate synthase family.</text>
</comment>
<evidence type="ECO:0000250" key="1"/>
<evidence type="ECO:0000256" key="2">
    <source>
        <dbReference type="SAM" id="MobiDB-lite"/>
    </source>
</evidence>
<evidence type="ECO:0000269" key="3">
    <source>
    </source>
</evidence>
<evidence type="ECO:0000305" key="4"/>
<feature type="chain" id="PRO_0000423988" description="Enduracididine beta-hydroxylase">
    <location>
        <begin position="1"/>
        <end position="341"/>
    </location>
</feature>
<feature type="region of interest" description="Disordered" evidence="2">
    <location>
        <begin position="203"/>
        <end position="223"/>
    </location>
</feature>
<feature type="binding site" evidence="1">
    <location>
        <position position="146"/>
    </location>
    <ligand>
        <name>Fe cation</name>
        <dbReference type="ChEBI" id="CHEBI:24875"/>
    </ligand>
</feature>
<feature type="binding site" evidence="1">
    <location>
        <position position="148"/>
    </location>
    <ligand>
        <name>Fe cation</name>
        <dbReference type="ChEBI" id="CHEBI:24875"/>
    </ligand>
</feature>
<feature type="binding site" evidence="1">
    <location>
        <position position="300"/>
    </location>
    <ligand>
        <name>Fe cation</name>
        <dbReference type="ChEBI" id="CHEBI:24875"/>
    </ligand>
</feature>
<sequence length="341" mass="38548">MLTLHLQDDDVAAIDAVADELSRRYDSVESTEFQAESRLYADELPRRVRRALHEYRSTEKSGILVVTGLPVDDSALGATPADRRHKPVPSTSLRQDIAFYLIANLLGDPIGWATQQDGFIMHDVYPVQGFEHEQIGWGSEETLTWHTEDAFHPLRTDYLGLMCLRNPDGVETTACDIADVEIDDETRETLSQERFRILPDDAHRIHGKAPGDESARESALRERSRQRVASALESPDPVAVLFGDRDDPYLRIDPHYMQGVQGETEQRALETIGAAIDDAMSGVVLSPGDIVFIDNYRVVHGRKPFRARFDGTDRWLRRLNIARDLRKSREARLAATTRVIY</sequence>
<proteinExistence type="evidence at protein level"/>
<protein>
    <recommendedName>
        <fullName>Enduracididine beta-hydroxylase</fullName>
        <ecNumber>1.14.11.40</ecNumber>
    </recommendedName>
    <alternativeName>
        <fullName>Mannopeptimycin biosynthesis protein O</fullName>
    </alternativeName>
</protein>
<keyword id="KW-0045">Antibiotic biosynthesis</keyword>
<keyword id="KW-0408">Iron</keyword>
<keyword id="KW-0479">Metal-binding</keyword>
<keyword id="KW-0560">Oxidoreductase</keyword>
<organism>
    <name type="scientific">Streptomyces hygroscopicus</name>
    <dbReference type="NCBI Taxonomy" id="1912"/>
    <lineage>
        <taxon>Bacteria</taxon>
        <taxon>Bacillati</taxon>
        <taxon>Actinomycetota</taxon>
        <taxon>Actinomycetes</taxon>
        <taxon>Kitasatosporales</taxon>
        <taxon>Streptomycetaceae</taxon>
        <taxon>Streptomyces</taxon>
        <taxon>Streptomyces violaceusniger group</taxon>
    </lineage>
</organism>
<reference key="1">
    <citation type="journal article" date="2006" name="Antimicrob. Agents Chemother.">
        <title>Biosynthetic pathway for mannopeptimycins, lipoglycopeptide antibiotics active against drug-resistant gram-positive pathogens.</title>
        <authorList>
            <person name="Magarvey N.A."/>
            <person name="Haltli B."/>
            <person name="He M."/>
            <person name="Greenstein M."/>
            <person name="Hucul J.A."/>
        </authorList>
    </citation>
    <scope>NUCLEOTIDE SEQUENCE [GENOMIC DNA]</scope>
    <source>
        <strain>NRRL 30439</strain>
    </source>
</reference>
<reference key="2">
    <citation type="journal article" date="2005" name="Chem. Biol.">
        <title>Investigating beta-hydroxyenduracididine formation in the biosynthesis of the mannopeptimycins.</title>
        <authorList>
            <person name="Haltli B."/>
            <person name="Tan Y."/>
            <person name="Magarvey N.A."/>
            <person name="Wagenaar M."/>
            <person name="Yin X."/>
            <person name="Greenstein M."/>
            <person name="Hucul J.A."/>
            <person name="Zabriskie T.M."/>
        </authorList>
    </citation>
    <scope>FUNCTION</scope>
    <scope>CATALYTIC ACTIVITY</scope>
    <scope>PATHWAY</scope>
    <scope>DISRUPTION PHENOTYPE</scope>
    <source>
        <strain>NRRL 30439</strain>
    </source>
</reference>